<evidence type="ECO:0000255" key="1">
    <source>
        <dbReference type="HAMAP-Rule" id="MF_00636"/>
    </source>
</evidence>
<dbReference type="EMBL" id="CP001581">
    <property type="protein sequence ID" value="ACO83816.1"/>
    <property type="molecule type" value="Genomic_DNA"/>
</dbReference>
<dbReference type="SMR" id="C1FM59"/>
<dbReference type="KEGG" id="cby:CLM_3839"/>
<dbReference type="eggNOG" id="COG1660">
    <property type="taxonomic scope" value="Bacteria"/>
</dbReference>
<dbReference type="HOGENOM" id="CLU_059558_0_0_9"/>
<dbReference type="Proteomes" id="UP000001374">
    <property type="component" value="Chromosome"/>
</dbReference>
<dbReference type="GO" id="GO:0005524">
    <property type="term" value="F:ATP binding"/>
    <property type="evidence" value="ECO:0007669"/>
    <property type="project" value="UniProtKB-UniRule"/>
</dbReference>
<dbReference type="GO" id="GO:0005525">
    <property type="term" value="F:GTP binding"/>
    <property type="evidence" value="ECO:0007669"/>
    <property type="project" value="UniProtKB-UniRule"/>
</dbReference>
<dbReference type="Gene3D" id="3.40.50.300">
    <property type="entry name" value="P-loop containing nucleotide triphosphate hydrolases"/>
    <property type="match status" value="1"/>
</dbReference>
<dbReference type="HAMAP" id="MF_00636">
    <property type="entry name" value="RapZ_like"/>
    <property type="match status" value="1"/>
</dbReference>
<dbReference type="InterPro" id="IPR027417">
    <property type="entry name" value="P-loop_NTPase"/>
</dbReference>
<dbReference type="InterPro" id="IPR005337">
    <property type="entry name" value="RapZ-like"/>
</dbReference>
<dbReference type="InterPro" id="IPR053930">
    <property type="entry name" value="RapZ-like_N"/>
</dbReference>
<dbReference type="InterPro" id="IPR053931">
    <property type="entry name" value="RapZ_C"/>
</dbReference>
<dbReference type="NCBIfam" id="NF003828">
    <property type="entry name" value="PRK05416.1"/>
    <property type="match status" value="1"/>
</dbReference>
<dbReference type="PANTHER" id="PTHR30448">
    <property type="entry name" value="RNASE ADAPTER PROTEIN RAPZ"/>
    <property type="match status" value="1"/>
</dbReference>
<dbReference type="PANTHER" id="PTHR30448:SF0">
    <property type="entry name" value="RNASE ADAPTER PROTEIN RAPZ"/>
    <property type="match status" value="1"/>
</dbReference>
<dbReference type="Pfam" id="PF22740">
    <property type="entry name" value="PapZ_C"/>
    <property type="match status" value="1"/>
</dbReference>
<dbReference type="Pfam" id="PF03668">
    <property type="entry name" value="RapZ-like_N"/>
    <property type="match status" value="1"/>
</dbReference>
<dbReference type="PIRSF" id="PIRSF005052">
    <property type="entry name" value="P-loopkin"/>
    <property type="match status" value="1"/>
</dbReference>
<dbReference type="SUPFAM" id="SSF52540">
    <property type="entry name" value="P-loop containing nucleoside triphosphate hydrolases"/>
    <property type="match status" value="1"/>
</dbReference>
<reference key="1">
    <citation type="submission" date="2008-10" db="EMBL/GenBank/DDBJ databases">
        <title>Genome sequence of Clostridium botulinum A2 Kyoto.</title>
        <authorList>
            <person name="Shrivastava S."/>
            <person name="Brinkac L.M."/>
            <person name="Brown J.L."/>
            <person name="Bruce D."/>
            <person name="Detter C.C."/>
            <person name="Johnson E.A."/>
            <person name="Munk C.A."/>
            <person name="Smith L.A."/>
            <person name="Smith T.J."/>
            <person name="Sutton G."/>
            <person name="Brettin T.S."/>
        </authorList>
    </citation>
    <scope>NUCLEOTIDE SEQUENCE [LARGE SCALE GENOMIC DNA]</scope>
    <source>
        <strain>Kyoto / Type A2</strain>
    </source>
</reference>
<accession>C1FM59</accession>
<feature type="chain" id="PRO_1000147354" description="Nucleotide-binding protein CLM_3839">
    <location>
        <begin position="1"/>
        <end position="294"/>
    </location>
</feature>
<feature type="binding site" evidence="1">
    <location>
        <begin position="8"/>
        <end position="15"/>
    </location>
    <ligand>
        <name>ATP</name>
        <dbReference type="ChEBI" id="CHEBI:30616"/>
    </ligand>
</feature>
<feature type="binding site" evidence="1">
    <location>
        <begin position="59"/>
        <end position="62"/>
    </location>
    <ligand>
        <name>GTP</name>
        <dbReference type="ChEBI" id="CHEBI:37565"/>
    </ligand>
</feature>
<sequence length="294" mass="33740">MRFVIVTGLSGAGKTQAIRSLEDLGFFCVDNLPPTLIPKFAEACYQTEGKIKKIALVIDIRGGKFFDDLFESLKYLKEEGYKYEILFLDASDEVLIKRFKESRRKHPLSPDGRILNGISMERNRLREVKDRADNIINTSELATRELREAINEIYGEHDQIENQLIITVLSFGFKHGIPLDSDLVFDVRFLPNPYYIKELKQYSGKDKKVSDYVMSFDVTNKFVNRLEDMLDFLIPNYFKEGKRQLIISIGCTGGRHRSVAIANAIYEGLKSKGHKVNIDHRDINEDIHKGGKKL</sequence>
<name>Y3839_CLOBJ</name>
<organism>
    <name type="scientific">Clostridium botulinum (strain Kyoto / Type A2)</name>
    <dbReference type="NCBI Taxonomy" id="536232"/>
    <lineage>
        <taxon>Bacteria</taxon>
        <taxon>Bacillati</taxon>
        <taxon>Bacillota</taxon>
        <taxon>Clostridia</taxon>
        <taxon>Eubacteriales</taxon>
        <taxon>Clostridiaceae</taxon>
        <taxon>Clostridium</taxon>
    </lineage>
</organism>
<comment type="function">
    <text evidence="1">Displays ATPase and GTPase activities.</text>
</comment>
<comment type="similarity">
    <text evidence="1">Belongs to the RapZ-like family.</text>
</comment>
<gene>
    <name type="ordered locus">CLM_3839</name>
</gene>
<keyword id="KW-0067">ATP-binding</keyword>
<keyword id="KW-0342">GTP-binding</keyword>
<keyword id="KW-0547">Nucleotide-binding</keyword>
<proteinExistence type="inferred from homology"/>
<protein>
    <recommendedName>
        <fullName evidence="1">Nucleotide-binding protein CLM_3839</fullName>
    </recommendedName>
</protein>